<accession>P56793</accession>
<proteinExistence type="inferred from homology"/>
<name>RK16_ARATH</name>
<protein>
    <recommendedName>
        <fullName evidence="2">Large ribosomal subunit protein uL16c</fullName>
    </recommendedName>
    <alternativeName>
        <fullName evidence="1">50S ribosomal protein L16, chloroplastic</fullName>
    </alternativeName>
</protein>
<geneLocation type="chloroplast"/>
<organism>
    <name type="scientific">Arabidopsis thaliana</name>
    <name type="common">Mouse-ear cress</name>
    <dbReference type="NCBI Taxonomy" id="3702"/>
    <lineage>
        <taxon>Eukaryota</taxon>
        <taxon>Viridiplantae</taxon>
        <taxon>Streptophyta</taxon>
        <taxon>Embryophyta</taxon>
        <taxon>Tracheophyta</taxon>
        <taxon>Spermatophyta</taxon>
        <taxon>Magnoliopsida</taxon>
        <taxon>eudicotyledons</taxon>
        <taxon>Gunneridae</taxon>
        <taxon>Pentapetalae</taxon>
        <taxon>rosids</taxon>
        <taxon>malvids</taxon>
        <taxon>Brassicales</taxon>
        <taxon>Brassicaceae</taxon>
        <taxon>Camelineae</taxon>
        <taxon>Arabidopsis</taxon>
    </lineage>
</organism>
<reference key="1">
    <citation type="journal article" date="1999" name="DNA Res.">
        <title>Complete structure of the chloroplast genome of Arabidopsis thaliana.</title>
        <authorList>
            <person name="Sato S."/>
            <person name="Nakamura Y."/>
            <person name="Kaneko T."/>
            <person name="Asamizu E."/>
            <person name="Tabata S."/>
        </authorList>
    </citation>
    <scope>NUCLEOTIDE SEQUENCE [LARGE SCALE GENOMIC DNA]</scope>
    <source>
        <strain>cv. Columbia</strain>
    </source>
</reference>
<reference key="2">
    <citation type="journal article" date="2023" name="Plant Cell">
        <title>An updated nomenclature for plant ribosomal protein genes.</title>
        <authorList>
            <person name="Scarpin M.R."/>
            <person name="Busche M."/>
            <person name="Martinez R.E."/>
            <person name="Harper L.C."/>
            <person name="Reiser L."/>
            <person name="Szakonyi D."/>
            <person name="Merchante C."/>
            <person name="Lan T."/>
            <person name="Xiong W."/>
            <person name="Mo B."/>
            <person name="Tang G."/>
            <person name="Chen X."/>
            <person name="Bailey-Serres J."/>
            <person name="Browning K.S."/>
            <person name="Brunkard J.O."/>
        </authorList>
    </citation>
    <scope>NOMENCLATURE</scope>
</reference>
<sequence>MLSPKRTRFRKQHRGRLKGISSRGNRICFGRYALQTLEPAWITSRQIEAGRRAMTRNVRRGGKIWVRIFPDKPVTVRPAETRMGSGKGSPEYWVAVVKPGKILYEMGGVPENIARKAISIAASKMPIKTQFIISE</sequence>
<feature type="chain" id="PRO_0000062268" description="Large ribosomal subunit protein uL16c">
    <location>
        <begin position="1"/>
        <end position="135"/>
    </location>
</feature>
<gene>
    <name evidence="1" type="primary">rpl16</name>
    <name type="ordered locus">AtCg00790</name>
</gene>
<keyword id="KW-0150">Chloroplast</keyword>
<keyword id="KW-0934">Plastid</keyword>
<keyword id="KW-1185">Reference proteome</keyword>
<keyword id="KW-0687">Ribonucleoprotein</keyword>
<keyword id="KW-0689">Ribosomal protein</keyword>
<evidence type="ECO:0000255" key="1">
    <source>
        <dbReference type="HAMAP-Rule" id="MF_01342"/>
    </source>
</evidence>
<evidence type="ECO:0000303" key="2">
    <source>
    </source>
</evidence>
<comment type="subunit">
    <text evidence="1">Part of the 50S ribosomal subunit.</text>
</comment>
<comment type="subcellular location">
    <subcellularLocation>
        <location>Plastid</location>
        <location>Chloroplast</location>
    </subcellularLocation>
</comment>
<comment type="similarity">
    <text evidence="1">Belongs to the universal ribosomal protein uL16 family.</text>
</comment>
<dbReference type="EMBL" id="AP000423">
    <property type="protein sequence ID" value="BAA84422.1"/>
    <property type="molecule type" value="Genomic_DNA"/>
</dbReference>
<dbReference type="RefSeq" id="NP_051095.1">
    <property type="nucleotide sequence ID" value="NC_000932.1"/>
</dbReference>
<dbReference type="SMR" id="P56793"/>
<dbReference type="BioGRID" id="29928">
    <property type="interactions" value="14"/>
</dbReference>
<dbReference type="FunCoup" id="P56793">
    <property type="interactions" value="1093"/>
</dbReference>
<dbReference type="STRING" id="3702.P56793"/>
<dbReference type="PaxDb" id="3702-ATCG00790.1"/>
<dbReference type="ProteomicsDB" id="234845"/>
<dbReference type="EnsemblPlants" id="ATCG00790.1">
    <property type="protein sequence ID" value="ATCG00790.1"/>
    <property type="gene ID" value="ATCG00790"/>
</dbReference>
<dbReference type="GeneID" id="844722"/>
<dbReference type="Gramene" id="ATCG00790.1">
    <property type="protein sequence ID" value="ATCG00790.1"/>
    <property type="gene ID" value="ATCG00790"/>
</dbReference>
<dbReference type="KEGG" id="ath:ArthCp060"/>
<dbReference type="Araport" id="ATCG00790"/>
<dbReference type="TAIR" id="ATCG00790">
    <property type="gene designation" value="RPL16"/>
</dbReference>
<dbReference type="eggNOG" id="KOG3422">
    <property type="taxonomic scope" value="Eukaryota"/>
</dbReference>
<dbReference type="HOGENOM" id="CLU_078858_2_1_1"/>
<dbReference type="InParanoid" id="P56793"/>
<dbReference type="OMA" id="KGAVEYW"/>
<dbReference type="PRO" id="PR:P56793"/>
<dbReference type="Proteomes" id="UP000006548">
    <property type="component" value="Chloroplast Pltd"/>
</dbReference>
<dbReference type="ExpressionAtlas" id="P56793">
    <property type="expression patterns" value="baseline and differential"/>
</dbReference>
<dbReference type="GO" id="GO:0009507">
    <property type="term" value="C:chloroplast"/>
    <property type="evidence" value="ECO:0007005"/>
    <property type="project" value="TAIR"/>
</dbReference>
<dbReference type="GO" id="GO:0009941">
    <property type="term" value="C:chloroplast envelope"/>
    <property type="evidence" value="ECO:0007005"/>
    <property type="project" value="TAIR"/>
</dbReference>
<dbReference type="GO" id="GO:0009570">
    <property type="term" value="C:chloroplast stroma"/>
    <property type="evidence" value="ECO:0007005"/>
    <property type="project" value="TAIR"/>
</dbReference>
<dbReference type="GO" id="GO:0009536">
    <property type="term" value="C:plastid"/>
    <property type="evidence" value="ECO:0007005"/>
    <property type="project" value="TAIR"/>
</dbReference>
<dbReference type="GO" id="GO:1990904">
    <property type="term" value="C:ribonucleoprotein complex"/>
    <property type="evidence" value="ECO:0007669"/>
    <property type="project" value="UniProtKB-KW"/>
</dbReference>
<dbReference type="GO" id="GO:0005840">
    <property type="term" value="C:ribosome"/>
    <property type="evidence" value="ECO:0007669"/>
    <property type="project" value="UniProtKB-KW"/>
</dbReference>
<dbReference type="GO" id="GO:0003729">
    <property type="term" value="F:mRNA binding"/>
    <property type="evidence" value="ECO:0000314"/>
    <property type="project" value="TAIR"/>
</dbReference>
<dbReference type="GO" id="GO:0019843">
    <property type="term" value="F:rRNA binding"/>
    <property type="evidence" value="ECO:0007669"/>
    <property type="project" value="InterPro"/>
</dbReference>
<dbReference type="GO" id="GO:0003735">
    <property type="term" value="F:structural constituent of ribosome"/>
    <property type="evidence" value="ECO:0007669"/>
    <property type="project" value="InterPro"/>
</dbReference>
<dbReference type="GO" id="GO:0006412">
    <property type="term" value="P:translation"/>
    <property type="evidence" value="ECO:0007669"/>
    <property type="project" value="UniProtKB-UniRule"/>
</dbReference>
<dbReference type="CDD" id="cd01433">
    <property type="entry name" value="Ribosomal_L16_L10e"/>
    <property type="match status" value="1"/>
</dbReference>
<dbReference type="FunFam" id="3.90.1170.10:FF:000001">
    <property type="entry name" value="50S ribosomal protein L16"/>
    <property type="match status" value="1"/>
</dbReference>
<dbReference type="Gene3D" id="3.90.1170.10">
    <property type="entry name" value="Ribosomal protein L10e/L16"/>
    <property type="match status" value="1"/>
</dbReference>
<dbReference type="HAMAP" id="MF_01342">
    <property type="entry name" value="Ribosomal_uL16"/>
    <property type="match status" value="1"/>
</dbReference>
<dbReference type="InterPro" id="IPR047873">
    <property type="entry name" value="Ribosomal_uL16"/>
</dbReference>
<dbReference type="InterPro" id="IPR000114">
    <property type="entry name" value="Ribosomal_uL16_bact-type"/>
</dbReference>
<dbReference type="InterPro" id="IPR020798">
    <property type="entry name" value="Ribosomal_uL16_CS"/>
</dbReference>
<dbReference type="InterPro" id="IPR016180">
    <property type="entry name" value="Ribosomal_uL16_dom"/>
</dbReference>
<dbReference type="InterPro" id="IPR036920">
    <property type="entry name" value="Ribosomal_uL16_sf"/>
</dbReference>
<dbReference type="NCBIfam" id="TIGR01164">
    <property type="entry name" value="rplP_bact"/>
    <property type="match status" value="1"/>
</dbReference>
<dbReference type="PANTHER" id="PTHR12220">
    <property type="entry name" value="50S/60S RIBOSOMAL PROTEIN L16"/>
    <property type="match status" value="1"/>
</dbReference>
<dbReference type="PANTHER" id="PTHR12220:SF13">
    <property type="entry name" value="LARGE RIBOSOMAL SUBUNIT PROTEIN UL16M"/>
    <property type="match status" value="1"/>
</dbReference>
<dbReference type="Pfam" id="PF00252">
    <property type="entry name" value="Ribosomal_L16"/>
    <property type="match status" value="1"/>
</dbReference>
<dbReference type="PRINTS" id="PR00060">
    <property type="entry name" value="RIBOSOMALL16"/>
</dbReference>
<dbReference type="SUPFAM" id="SSF54686">
    <property type="entry name" value="Ribosomal protein L16p/L10e"/>
    <property type="match status" value="1"/>
</dbReference>
<dbReference type="PROSITE" id="PS00586">
    <property type="entry name" value="RIBOSOMAL_L16_1"/>
    <property type="match status" value="1"/>
</dbReference>
<dbReference type="PROSITE" id="PS00701">
    <property type="entry name" value="RIBOSOMAL_L16_2"/>
    <property type="match status" value="1"/>
</dbReference>